<reference key="1">
    <citation type="journal article" date="2001" name="Nature">
        <title>Genome sequence of Yersinia pestis, the causative agent of plague.</title>
        <authorList>
            <person name="Parkhill J."/>
            <person name="Wren B.W."/>
            <person name="Thomson N.R."/>
            <person name="Titball R.W."/>
            <person name="Holden M.T.G."/>
            <person name="Prentice M.B."/>
            <person name="Sebaihia M."/>
            <person name="James K.D."/>
            <person name="Churcher C.M."/>
            <person name="Mungall K.L."/>
            <person name="Baker S."/>
            <person name="Basham D."/>
            <person name="Bentley S.D."/>
            <person name="Brooks K."/>
            <person name="Cerdeno-Tarraga A.-M."/>
            <person name="Chillingworth T."/>
            <person name="Cronin A."/>
            <person name="Davies R.M."/>
            <person name="Davis P."/>
            <person name="Dougan G."/>
            <person name="Feltwell T."/>
            <person name="Hamlin N."/>
            <person name="Holroyd S."/>
            <person name="Jagels K."/>
            <person name="Karlyshev A.V."/>
            <person name="Leather S."/>
            <person name="Moule S."/>
            <person name="Oyston P.C.F."/>
            <person name="Quail M.A."/>
            <person name="Rutherford K.M."/>
            <person name="Simmonds M."/>
            <person name="Skelton J."/>
            <person name="Stevens K."/>
            <person name="Whitehead S."/>
            <person name="Barrell B.G."/>
        </authorList>
    </citation>
    <scope>NUCLEOTIDE SEQUENCE [LARGE SCALE GENOMIC DNA]</scope>
    <source>
        <strain>CO-92 / Biovar Orientalis</strain>
    </source>
</reference>
<reference key="2">
    <citation type="journal article" date="2002" name="J. Bacteriol.">
        <title>Genome sequence of Yersinia pestis KIM.</title>
        <authorList>
            <person name="Deng W."/>
            <person name="Burland V."/>
            <person name="Plunkett G. III"/>
            <person name="Boutin A."/>
            <person name="Mayhew G.F."/>
            <person name="Liss P."/>
            <person name="Perna N.T."/>
            <person name="Rose D.J."/>
            <person name="Mau B."/>
            <person name="Zhou S."/>
            <person name="Schwartz D.C."/>
            <person name="Fetherston J.D."/>
            <person name="Lindler L.E."/>
            <person name="Brubaker R.R."/>
            <person name="Plano G.V."/>
            <person name="Straley S.C."/>
            <person name="McDonough K.A."/>
            <person name="Nilles M.L."/>
            <person name="Matson J.S."/>
            <person name="Blattner F.R."/>
            <person name="Perry R.D."/>
        </authorList>
    </citation>
    <scope>NUCLEOTIDE SEQUENCE [LARGE SCALE GENOMIC DNA]</scope>
    <source>
        <strain>KIM10+ / Biovar Mediaevalis</strain>
    </source>
</reference>
<reference key="3">
    <citation type="journal article" date="2004" name="DNA Res.">
        <title>Complete genome sequence of Yersinia pestis strain 91001, an isolate avirulent to humans.</title>
        <authorList>
            <person name="Song Y."/>
            <person name="Tong Z."/>
            <person name="Wang J."/>
            <person name="Wang L."/>
            <person name="Guo Z."/>
            <person name="Han Y."/>
            <person name="Zhang J."/>
            <person name="Pei D."/>
            <person name="Zhou D."/>
            <person name="Qin H."/>
            <person name="Pang X."/>
            <person name="Han Y."/>
            <person name="Zhai J."/>
            <person name="Li M."/>
            <person name="Cui B."/>
            <person name="Qi Z."/>
            <person name="Jin L."/>
            <person name="Dai R."/>
            <person name="Chen F."/>
            <person name="Li S."/>
            <person name="Ye C."/>
            <person name="Du Z."/>
            <person name="Lin W."/>
            <person name="Wang J."/>
            <person name="Yu J."/>
            <person name="Yang H."/>
            <person name="Wang J."/>
            <person name="Huang P."/>
            <person name="Yang R."/>
        </authorList>
    </citation>
    <scope>NUCLEOTIDE SEQUENCE [LARGE SCALE GENOMIC DNA]</scope>
    <source>
        <strain>91001 / Biovar Mediaevalis</strain>
    </source>
</reference>
<feature type="chain" id="PRO_0000110774" description="Orotate phosphoribosyltransferase">
    <location>
        <begin position="1"/>
        <end position="215"/>
    </location>
</feature>
<feature type="binding site" description="in other chain" evidence="1">
    <location>
        <position position="26"/>
    </location>
    <ligand>
        <name>5-phospho-alpha-D-ribose 1-diphosphate</name>
        <dbReference type="ChEBI" id="CHEBI:58017"/>
        <note>ligand shared between dimeric partners</note>
    </ligand>
</feature>
<feature type="binding site" evidence="1">
    <location>
        <begin position="34"/>
        <end position="35"/>
    </location>
    <ligand>
        <name>orotate</name>
        <dbReference type="ChEBI" id="CHEBI:30839"/>
    </ligand>
</feature>
<feature type="binding site" description="in other chain" evidence="1">
    <location>
        <begin position="72"/>
        <end position="73"/>
    </location>
    <ligand>
        <name>5-phospho-alpha-D-ribose 1-diphosphate</name>
        <dbReference type="ChEBI" id="CHEBI:58017"/>
        <note>ligand shared between dimeric partners</note>
    </ligand>
</feature>
<feature type="binding site" evidence="1">
    <location>
        <position position="99"/>
    </location>
    <ligand>
        <name>5-phospho-alpha-D-ribose 1-diphosphate</name>
        <dbReference type="ChEBI" id="CHEBI:58017"/>
        <note>ligand shared between dimeric partners</note>
    </ligand>
</feature>
<feature type="binding site" description="in other chain" evidence="1">
    <location>
        <position position="100"/>
    </location>
    <ligand>
        <name>5-phospho-alpha-D-ribose 1-diphosphate</name>
        <dbReference type="ChEBI" id="CHEBI:58017"/>
        <note>ligand shared between dimeric partners</note>
    </ligand>
</feature>
<feature type="binding site" evidence="1">
    <location>
        <position position="103"/>
    </location>
    <ligand>
        <name>5-phospho-alpha-D-ribose 1-diphosphate</name>
        <dbReference type="ChEBI" id="CHEBI:58017"/>
        <note>ligand shared between dimeric partners</note>
    </ligand>
</feature>
<feature type="binding site" evidence="1">
    <location>
        <position position="105"/>
    </location>
    <ligand>
        <name>5-phospho-alpha-D-ribose 1-diphosphate</name>
        <dbReference type="ChEBI" id="CHEBI:58017"/>
        <note>ligand shared between dimeric partners</note>
    </ligand>
</feature>
<feature type="binding site" description="in other chain" evidence="1">
    <location>
        <begin position="124"/>
        <end position="132"/>
    </location>
    <ligand>
        <name>5-phospho-alpha-D-ribose 1-diphosphate</name>
        <dbReference type="ChEBI" id="CHEBI:58017"/>
        <note>ligand shared between dimeric partners</note>
    </ligand>
</feature>
<feature type="binding site" evidence="1">
    <location>
        <position position="128"/>
    </location>
    <ligand>
        <name>orotate</name>
        <dbReference type="ChEBI" id="CHEBI:30839"/>
    </ligand>
</feature>
<feature type="binding site" evidence="1">
    <location>
        <position position="156"/>
    </location>
    <ligand>
        <name>orotate</name>
        <dbReference type="ChEBI" id="CHEBI:30839"/>
    </ligand>
</feature>
<protein>
    <recommendedName>
        <fullName evidence="1">Orotate phosphoribosyltransferase</fullName>
        <shortName evidence="1">OPRT</shortName>
        <shortName evidence="1">OPRTase</shortName>
        <ecNumber evidence="1">2.4.2.10</ecNumber>
    </recommendedName>
</protein>
<evidence type="ECO:0000255" key="1">
    <source>
        <dbReference type="HAMAP-Rule" id="MF_01208"/>
    </source>
</evidence>
<sequence>MKAYQREFIEFALNKQVLKFGEFTLKSGRISPYFFNAGLFNTGLDLAKLGRFYAAALMDCGVEFDLLFGPAYKGIPIATTTAVALAEHHERDVPYCFNRKEAKTHGEGGNLVGSPLQGRVMLVDDVITAGTAIRESMEIINAQGATLAGVMISLDRQERGRGEISAIQEVERDYHCKVIAIVTLNDVIRYLEDKPEMAEHLVAVRQYREQYGVTL</sequence>
<organism>
    <name type="scientific">Yersinia pestis</name>
    <dbReference type="NCBI Taxonomy" id="632"/>
    <lineage>
        <taxon>Bacteria</taxon>
        <taxon>Pseudomonadati</taxon>
        <taxon>Pseudomonadota</taxon>
        <taxon>Gammaproteobacteria</taxon>
        <taxon>Enterobacterales</taxon>
        <taxon>Yersiniaceae</taxon>
        <taxon>Yersinia</taxon>
    </lineage>
</organism>
<proteinExistence type="inferred from homology"/>
<accession>Q8ZJP7</accession>
<accession>Q0WKP7</accession>
<dbReference type="EC" id="2.4.2.10" evidence="1"/>
<dbReference type="EMBL" id="AL590842">
    <property type="protein sequence ID" value="CAL18735.1"/>
    <property type="molecule type" value="Genomic_DNA"/>
</dbReference>
<dbReference type="EMBL" id="AE009952">
    <property type="protein sequence ID" value="AAM83690.1"/>
    <property type="molecule type" value="Genomic_DNA"/>
</dbReference>
<dbReference type="EMBL" id="AE017042">
    <property type="protein sequence ID" value="AAS60327.1"/>
    <property type="molecule type" value="Genomic_DNA"/>
</dbReference>
<dbReference type="PIR" id="AF0006">
    <property type="entry name" value="AF0006"/>
</dbReference>
<dbReference type="RefSeq" id="WP_002208996.1">
    <property type="nucleotide sequence ID" value="NZ_WUCM01000015.1"/>
</dbReference>
<dbReference type="RefSeq" id="YP_002345141.1">
    <property type="nucleotide sequence ID" value="NC_003143.1"/>
</dbReference>
<dbReference type="SMR" id="Q8ZJP7"/>
<dbReference type="IntAct" id="Q8ZJP7">
    <property type="interactions" value="5"/>
</dbReference>
<dbReference type="STRING" id="214092.YPO0045"/>
<dbReference type="PaxDb" id="214092-YPO0045"/>
<dbReference type="DNASU" id="1145043"/>
<dbReference type="EnsemblBacteria" id="AAS60327">
    <property type="protein sequence ID" value="AAS60327"/>
    <property type="gene ID" value="YP_0046"/>
</dbReference>
<dbReference type="GeneID" id="57974545"/>
<dbReference type="KEGG" id="ype:YPO0045"/>
<dbReference type="KEGG" id="ypk:y0096"/>
<dbReference type="KEGG" id="ypm:YP_0046"/>
<dbReference type="PATRIC" id="fig|1028802.3.peg.331"/>
<dbReference type="eggNOG" id="COG0461">
    <property type="taxonomic scope" value="Bacteria"/>
</dbReference>
<dbReference type="HOGENOM" id="CLU_074878_0_1_6"/>
<dbReference type="OMA" id="SPFFMNA"/>
<dbReference type="OrthoDB" id="9779060at2"/>
<dbReference type="UniPathway" id="UPA00070">
    <property type="reaction ID" value="UER00119"/>
</dbReference>
<dbReference type="Proteomes" id="UP000000815">
    <property type="component" value="Chromosome"/>
</dbReference>
<dbReference type="Proteomes" id="UP000001019">
    <property type="component" value="Chromosome"/>
</dbReference>
<dbReference type="Proteomes" id="UP000002490">
    <property type="component" value="Chromosome"/>
</dbReference>
<dbReference type="GO" id="GO:0005737">
    <property type="term" value="C:cytoplasm"/>
    <property type="evidence" value="ECO:0000318"/>
    <property type="project" value="GO_Central"/>
</dbReference>
<dbReference type="GO" id="GO:0000287">
    <property type="term" value="F:magnesium ion binding"/>
    <property type="evidence" value="ECO:0007669"/>
    <property type="project" value="UniProtKB-UniRule"/>
</dbReference>
<dbReference type="GO" id="GO:0004588">
    <property type="term" value="F:orotate phosphoribosyltransferase activity"/>
    <property type="evidence" value="ECO:0000318"/>
    <property type="project" value="GO_Central"/>
</dbReference>
<dbReference type="GO" id="GO:0006207">
    <property type="term" value="P:'de novo' pyrimidine nucleobase biosynthetic process"/>
    <property type="evidence" value="ECO:0000318"/>
    <property type="project" value="GO_Central"/>
</dbReference>
<dbReference type="GO" id="GO:0044205">
    <property type="term" value="P:'de novo' UMP biosynthetic process"/>
    <property type="evidence" value="ECO:0007669"/>
    <property type="project" value="UniProtKB-UniRule"/>
</dbReference>
<dbReference type="GO" id="GO:0006221">
    <property type="term" value="P:pyrimidine nucleotide biosynthetic process"/>
    <property type="evidence" value="ECO:0000318"/>
    <property type="project" value="GO_Central"/>
</dbReference>
<dbReference type="GO" id="GO:0046132">
    <property type="term" value="P:pyrimidine ribonucleoside biosynthetic process"/>
    <property type="evidence" value="ECO:0000318"/>
    <property type="project" value="GO_Central"/>
</dbReference>
<dbReference type="CDD" id="cd06223">
    <property type="entry name" value="PRTases_typeI"/>
    <property type="match status" value="1"/>
</dbReference>
<dbReference type="FunFam" id="3.40.50.2020:FF:000008">
    <property type="entry name" value="Orotate phosphoribosyltransferase"/>
    <property type="match status" value="1"/>
</dbReference>
<dbReference type="Gene3D" id="3.40.50.2020">
    <property type="match status" value="1"/>
</dbReference>
<dbReference type="HAMAP" id="MF_01208">
    <property type="entry name" value="PyrE"/>
    <property type="match status" value="1"/>
</dbReference>
<dbReference type="InterPro" id="IPR023031">
    <property type="entry name" value="OPRT"/>
</dbReference>
<dbReference type="InterPro" id="IPR004467">
    <property type="entry name" value="Or_phspho_trans_dom"/>
</dbReference>
<dbReference type="InterPro" id="IPR000836">
    <property type="entry name" value="PRibTrfase_dom"/>
</dbReference>
<dbReference type="InterPro" id="IPR029057">
    <property type="entry name" value="PRTase-like"/>
</dbReference>
<dbReference type="NCBIfam" id="TIGR00336">
    <property type="entry name" value="pyrE"/>
    <property type="match status" value="1"/>
</dbReference>
<dbReference type="PANTHER" id="PTHR46683">
    <property type="entry name" value="OROTATE PHOSPHORIBOSYLTRANSFERASE 1-RELATED"/>
    <property type="match status" value="1"/>
</dbReference>
<dbReference type="PANTHER" id="PTHR46683:SF1">
    <property type="entry name" value="OROTATE PHOSPHORIBOSYLTRANSFERASE 1-RELATED"/>
    <property type="match status" value="1"/>
</dbReference>
<dbReference type="Pfam" id="PF00156">
    <property type="entry name" value="Pribosyltran"/>
    <property type="match status" value="1"/>
</dbReference>
<dbReference type="SUPFAM" id="SSF53271">
    <property type="entry name" value="PRTase-like"/>
    <property type="match status" value="1"/>
</dbReference>
<dbReference type="PROSITE" id="PS00103">
    <property type="entry name" value="PUR_PYR_PR_TRANSFER"/>
    <property type="match status" value="1"/>
</dbReference>
<gene>
    <name evidence="1" type="primary">pyrE</name>
    <name type="ordered locus">YPO0045</name>
    <name type="ordered locus">y0096</name>
    <name type="ordered locus">YP_0046</name>
</gene>
<comment type="function">
    <text evidence="1">Catalyzes the transfer of a ribosyl phosphate group from 5-phosphoribose 1-diphosphate to orotate, leading to the formation of orotidine monophosphate (OMP).</text>
</comment>
<comment type="catalytic activity">
    <reaction evidence="1">
        <text>orotidine 5'-phosphate + diphosphate = orotate + 5-phospho-alpha-D-ribose 1-diphosphate</text>
        <dbReference type="Rhea" id="RHEA:10380"/>
        <dbReference type="ChEBI" id="CHEBI:30839"/>
        <dbReference type="ChEBI" id="CHEBI:33019"/>
        <dbReference type="ChEBI" id="CHEBI:57538"/>
        <dbReference type="ChEBI" id="CHEBI:58017"/>
        <dbReference type="EC" id="2.4.2.10"/>
    </reaction>
</comment>
<comment type="cofactor">
    <cofactor evidence="1">
        <name>Mg(2+)</name>
        <dbReference type="ChEBI" id="CHEBI:18420"/>
    </cofactor>
</comment>
<comment type="pathway">
    <text evidence="1">Pyrimidine metabolism; UMP biosynthesis via de novo pathway; UMP from orotate: step 1/2.</text>
</comment>
<comment type="subunit">
    <text evidence="1">Homodimer.</text>
</comment>
<comment type="similarity">
    <text evidence="1">Belongs to the purine/pyrimidine phosphoribosyltransferase family. PyrE subfamily.</text>
</comment>
<keyword id="KW-0328">Glycosyltransferase</keyword>
<keyword id="KW-0460">Magnesium</keyword>
<keyword id="KW-0665">Pyrimidine biosynthesis</keyword>
<keyword id="KW-1185">Reference proteome</keyword>
<keyword id="KW-0808">Transferase</keyword>
<name>PYRE_YERPE</name>